<gene>
    <name type="primary">leuD</name>
    <name type="ordered locus">PAE1991</name>
</gene>
<feature type="chain" id="PRO_0000141946" description="3-isopropylmalate dehydratase small subunit">
    <location>
        <begin position="1"/>
        <end position="161"/>
    </location>
</feature>
<proteinExistence type="inferred from homology"/>
<accession>Q8ZW36</accession>
<keyword id="KW-0028">Amino-acid biosynthesis</keyword>
<keyword id="KW-0100">Branched-chain amino acid biosynthesis</keyword>
<keyword id="KW-0432">Leucine biosynthesis</keyword>
<keyword id="KW-0456">Lyase</keyword>
<keyword id="KW-1185">Reference proteome</keyword>
<comment type="function">
    <text evidence="1">Catalyzes the isomerization between 2-isopropylmalate and 3-isopropylmalate, via the formation of 2-isopropylmaleate.</text>
</comment>
<comment type="catalytic activity">
    <reaction>
        <text>(2R,3S)-3-isopropylmalate = (2S)-2-isopropylmalate</text>
        <dbReference type="Rhea" id="RHEA:32287"/>
        <dbReference type="ChEBI" id="CHEBI:1178"/>
        <dbReference type="ChEBI" id="CHEBI:35121"/>
        <dbReference type="EC" id="4.2.1.33"/>
    </reaction>
</comment>
<comment type="pathway">
    <text>Amino-acid biosynthesis; L-leucine biosynthesis; L-leucine from 3-methyl-2-oxobutanoate: step 2/4.</text>
</comment>
<comment type="subunit">
    <text evidence="1">Heterodimer of LeuC and LeuD.</text>
</comment>
<comment type="similarity">
    <text evidence="2">Belongs to the LeuD family. LeuD type 2 subfamily.</text>
</comment>
<evidence type="ECO:0000250" key="1"/>
<evidence type="ECO:0000305" key="2"/>
<organism>
    <name type="scientific">Pyrobaculum aerophilum (strain ATCC 51768 / DSM 7523 / JCM 9630 / CIP 104966 / NBRC 100827 / IM2)</name>
    <dbReference type="NCBI Taxonomy" id="178306"/>
    <lineage>
        <taxon>Archaea</taxon>
        <taxon>Thermoproteota</taxon>
        <taxon>Thermoprotei</taxon>
        <taxon>Thermoproteales</taxon>
        <taxon>Thermoproteaceae</taxon>
        <taxon>Pyrobaculum</taxon>
    </lineage>
</organism>
<dbReference type="EC" id="4.2.1.33"/>
<dbReference type="EMBL" id="AE009441">
    <property type="protein sequence ID" value="AAL63866.1"/>
    <property type="molecule type" value="Genomic_DNA"/>
</dbReference>
<dbReference type="RefSeq" id="WP_011008337.1">
    <property type="nucleotide sequence ID" value="NC_003364.1"/>
</dbReference>
<dbReference type="SMR" id="Q8ZW36"/>
<dbReference type="FunCoup" id="Q8ZW36">
    <property type="interactions" value="109"/>
</dbReference>
<dbReference type="STRING" id="178306.PAE1991"/>
<dbReference type="EnsemblBacteria" id="AAL63866">
    <property type="protein sequence ID" value="AAL63866"/>
    <property type="gene ID" value="PAE1991"/>
</dbReference>
<dbReference type="GeneID" id="1464189"/>
<dbReference type="KEGG" id="pai:PAE1991"/>
<dbReference type="PATRIC" id="fig|178306.9.peg.1471"/>
<dbReference type="eggNOG" id="arCOG02230">
    <property type="taxonomic scope" value="Archaea"/>
</dbReference>
<dbReference type="HOGENOM" id="CLU_081378_1_1_2"/>
<dbReference type="InParanoid" id="Q8ZW36"/>
<dbReference type="UniPathway" id="UPA00048">
    <property type="reaction ID" value="UER00071"/>
</dbReference>
<dbReference type="Proteomes" id="UP000002439">
    <property type="component" value="Chromosome"/>
</dbReference>
<dbReference type="GO" id="GO:0003861">
    <property type="term" value="F:3-isopropylmalate dehydratase activity"/>
    <property type="evidence" value="ECO:0007669"/>
    <property type="project" value="UniProtKB-UniRule"/>
</dbReference>
<dbReference type="GO" id="GO:0009098">
    <property type="term" value="P:L-leucine biosynthetic process"/>
    <property type="evidence" value="ECO:0007669"/>
    <property type="project" value="UniProtKB-UniRule"/>
</dbReference>
<dbReference type="CDD" id="cd01577">
    <property type="entry name" value="IPMI_Swivel"/>
    <property type="match status" value="1"/>
</dbReference>
<dbReference type="Gene3D" id="3.20.19.10">
    <property type="entry name" value="Aconitase, domain 4"/>
    <property type="match status" value="1"/>
</dbReference>
<dbReference type="HAMAP" id="MF_01032">
    <property type="entry name" value="LeuD_type2"/>
    <property type="match status" value="1"/>
</dbReference>
<dbReference type="InterPro" id="IPR015928">
    <property type="entry name" value="Aconitase/3IPM_dehydase_swvl"/>
</dbReference>
<dbReference type="InterPro" id="IPR000573">
    <property type="entry name" value="AconitaseA/IPMdHydase_ssu_swvl"/>
</dbReference>
<dbReference type="InterPro" id="IPR033940">
    <property type="entry name" value="IPMI_Swivel"/>
</dbReference>
<dbReference type="InterPro" id="IPR050075">
    <property type="entry name" value="LeuD"/>
</dbReference>
<dbReference type="InterPro" id="IPR011827">
    <property type="entry name" value="LeuD_type2/HacB/DmdB"/>
</dbReference>
<dbReference type="NCBIfam" id="TIGR02087">
    <property type="entry name" value="LEUD_arch"/>
    <property type="match status" value="1"/>
</dbReference>
<dbReference type="PANTHER" id="PTHR43345:SF2">
    <property type="entry name" value="3-ISOPROPYLMALATE DEHYDRATASE SMALL SUBUNIT 1"/>
    <property type="match status" value="1"/>
</dbReference>
<dbReference type="PANTHER" id="PTHR43345">
    <property type="entry name" value="3-ISOPROPYLMALATE DEHYDRATASE SMALL SUBUNIT 2-RELATED-RELATED"/>
    <property type="match status" value="1"/>
</dbReference>
<dbReference type="Pfam" id="PF00694">
    <property type="entry name" value="Aconitase_C"/>
    <property type="match status" value="1"/>
</dbReference>
<dbReference type="SUPFAM" id="SSF52016">
    <property type="entry name" value="LeuD/IlvD-like"/>
    <property type="match status" value="1"/>
</dbReference>
<reference key="1">
    <citation type="journal article" date="2002" name="Proc. Natl. Acad. Sci. U.S.A.">
        <title>Genome sequence of the hyperthermophilic crenarchaeon Pyrobaculum aerophilum.</title>
        <authorList>
            <person name="Fitz-Gibbon S.T."/>
            <person name="Ladner H."/>
            <person name="Kim U.-J."/>
            <person name="Stetter K.O."/>
            <person name="Simon M.I."/>
            <person name="Miller J.H."/>
        </authorList>
    </citation>
    <scope>NUCLEOTIDE SEQUENCE [LARGE SCALE GENOMIC DNA]</scope>
    <source>
        <strain>ATCC 51768 / DSM 7523 / JCM 9630 / CIP 104966 / NBRC 100827 / IM2</strain>
    </source>
</reference>
<sequence>MKIRGRALVYGDKIDTDVIIPAKYLVYTDPALLGQHAMEPLDPEFPKKAKGAVLVAGRAFGMGSSREQAALALKGAGVLAVVAESFARIFFRNAINVGLPVLQAPGIREKVKDGDEVELDVEGGIVRNITTGEVIVGKPLRGLPLEILKAGGLLNYLKNSR</sequence>
<name>LEUD_PYRAE</name>
<protein>
    <recommendedName>
        <fullName>3-isopropylmalate dehydratase small subunit</fullName>
        <ecNumber>4.2.1.33</ecNumber>
    </recommendedName>
    <alternativeName>
        <fullName>Alpha-IPM isomerase</fullName>
        <shortName>IPMI</shortName>
    </alternativeName>
    <alternativeName>
        <fullName>Isopropylmalate isomerase</fullName>
    </alternativeName>
</protein>